<protein>
    <recommendedName>
        <fullName evidence="1">Alanine--tRNA ligase</fullName>
        <ecNumber evidence="1">6.1.1.7</ecNumber>
    </recommendedName>
    <alternativeName>
        <fullName evidence="1">Alanyl-tRNA synthetase</fullName>
        <shortName evidence="1">AlaRS</shortName>
    </alternativeName>
</protein>
<evidence type="ECO:0000255" key="1">
    <source>
        <dbReference type="HAMAP-Rule" id="MF_00036"/>
    </source>
</evidence>
<reference key="1">
    <citation type="journal article" date="2007" name="Microbiology">
        <title>Comparative analysis of the Corynebacterium glutamicum group and complete genome sequence of strain R.</title>
        <authorList>
            <person name="Yukawa H."/>
            <person name="Omumasaba C.A."/>
            <person name="Nonaka H."/>
            <person name="Kos P."/>
            <person name="Okai N."/>
            <person name="Suzuki N."/>
            <person name="Suda M."/>
            <person name="Tsuge Y."/>
            <person name="Watanabe J."/>
            <person name="Ikeda Y."/>
            <person name="Vertes A.A."/>
            <person name="Inui M."/>
        </authorList>
    </citation>
    <scope>NUCLEOTIDE SEQUENCE [LARGE SCALE GENOMIC DNA]</scope>
    <source>
        <strain>R</strain>
    </source>
</reference>
<accession>A4QEK7</accession>
<name>SYA_CORGB</name>
<feature type="chain" id="PRO_0000347574" description="Alanine--tRNA ligase">
    <location>
        <begin position="1"/>
        <end position="888"/>
    </location>
</feature>
<feature type="binding site" evidence="1">
    <location>
        <position position="573"/>
    </location>
    <ligand>
        <name>Zn(2+)</name>
        <dbReference type="ChEBI" id="CHEBI:29105"/>
    </ligand>
</feature>
<feature type="binding site" evidence="1">
    <location>
        <position position="577"/>
    </location>
    <ligand>
        <name>Zn(2+)</name>
        <dbReference type="ChEBI" id="CHEBI:29105"/>
    </ligand>
</feature>
<feature type="binding site" evidence="1">
    <location>
        <position position="676"/>
    </location>
    <ligand>
        <name>Zn(2+)</name>
        <dbReference type="ChEBI" id="CHEBI:29105"/>
    </ligand>
</feature>
<feature type="binding site" evidence="1">
    <location>
        <position position="680"/>
    </location>
    <ligand>
        <name>Zn(2+)</name>
        <dbReference type="ChEBI" id="CHEBI:29105"/>
    </ligand>
</feature>
<proteinExistence type="inferred from homology"/>
<keyword id="KW-0030">Aminoacyl-tRNA synthetase</keyword>
<keyword id="KW-0067">ATP-binding</keyword>
<keyword id="KW-0963">Cytoplasm</keyword>
<keyword id="KW-0436">Ligase</keyword>
<keyword id="KW-0479">Metal-binding</keyword>
<keyword id="KW-0547">Nucleotide-binding</keyword>
<keyword id="KW-0648">Protein biosynthesis</keyword>
<keyword id="KW-0694">RNA-binding</keyword>
<keyword id="KW-0820">tRNA-binding</keyword>
<keyword id="KW-0862">Zinc</keyword>
<sequence length="888" mass="96210">MQTHEIRERFTNHFVNAGHQAVPSASLILDDPNLLFVNAGMVPFKPYFLGQQTPPFENGTATSIQKCVRTLDIEEVGITTRHNTFFQMAGNFSFGQYFKEGAITHAWGLLTGSVADGGFGLDPERLWVTVYLDDDEAAEIWEKKIGVPAERIQRLGMADNYWSMGVPGPCGPCSEIYYDRGEKYGKEGGPVADDNRYMEIWNLVFMEKERGQGIGKDNFEILGDLPKKNIDTGMGVERVACILQDVENVYETDLLRPVIDVAETLTGTKYGSDNTSDIRFRVIADHSRTGMMLILDGVTPGNEGRGYILRRLLRRIIRSARLLGATGETMEQFMNTIMDTMTPSYPEIADNRERIMRVAVTEERAFLKTLVSGTHLFEEAATSIKAAGSTKVAGAQAFALHDTYGFPIDLTLEMAAEAGLEVDVEGFDSLMAEQRSRAKADSQAKKHGHTDLSIYREWVDNNPTVFTGFEELDSQSKVLGLLSDGAKISEATEGQEVEVILDQSPLYAESGGQLGDRGQILLGDTVLDVHDVQKIGKKLWVHKALVANGGLAVGDEVVASVDKQWRHAARQAHTATHLIHAALRQVLGPTAVQAGSMNKPGYLRFDFNYTEQLTPAQVEQIQAITNEAVDTDWAVNTVETSLEEAKAMGAMALFGENYGSTVRVVEIGGPFSMELCGGTHVAHSSQIGPVALLGESSIGSGVRRIEAYSGLNSFNYLSKERALAEGLASSLKAPSEELPERVAQLVDKLKAAEKEIEALHRQQLMAQTADLLNNAQEIGGVTTLLLRVKDNTNAGDLRTIATTLKDKLGDREGVLVIASDNAGKVPFVVAATKAAVARGAHSGNLVKLVGSYIDGRGGGKADLAQGSGANIAGLESAFGAVRAEIEAL</sequence>
<gene>
    <name evidence="1" type="primary">alaS</name>
    <name type="ordered locus">cgR_1680</name>
</gene>
<comment type="function">
    <text evidence="1">Catalyzes the attachment of alanine to tRNA(Ala) in a two-step reaction: alanine is first activated by ATP to form Ala-AMP and then transferred to the acceptor end of tRNA(Ala). Also edits incorrectly charged Ser-tRNA(Ala) and Gly-tRNA(Ala) via its editing domain.</text>
</comment>
<comment type="catalytic activity">
    <reaction evidence="1">
        <text>tRNA(Ala) + L-alanine + ATP = L-alanyl-tRNA(Ala) + AMP + diphosphate</text>
        <dbReference type="Rhea" id="RHEA:12540"/>
        <dbReference type="Rhea" id="RHEA-COMP:9657"/>
        <dbReference type="Rhea" id="RHEA-COMP:9923"/>
        <dbReference type="ChEBI" id="CHEBI:30616"/>
        <dbReference type="ChEBI" id="CHEBI:33019"/>
        <dbReference type="ChEBI" id="CHEBI:57972"/>
        <dbReference type="ChEBI" id="CHEBI:78442"/>
        <dbReference type="ChEBI" id="CHEBI:78497"/>
        <dbReference type="ChEBI" id="CHEBI:456215"/>
        <dbReference type="EC" id="6.1.1.7"/>
    </reaction>
</comment>
<comment type="cofactor">
    <cofactor evidence="1">
        <name>Zn(2+)</name>
        <dbReference type="ChEBI" id="CHEBI:29105"/>
    </cofactor>
    <text evidence="1">Binds 1 zinc ion per subunit.</text>
</comment>
<comment type="subcellular location">
    <subcellularLocation>
        <location evidence="1">Cytoplasm</location>
    </subcellularLocation>
</comment>
<comment type="domain">
    <text evidence="1">Consists of three domains; the N-terminal catalytic domain, the editing domain and the C-terminal C-Ala domain. The editing domain removes incorrectly charged amino acids, while the C-Ala domain, along with tRNA(Ala), serves as a bridge to cooperatively bring together the editing and aminoacylation centers thus stimulating deacylation of misacylated tRNAs.</text>
</comment>
<comment type="similarity">
    <text evidence="1">Belongs to the class-II aminoacyl-tRNA synthetase family.</text>
</comment>
<dbReference type="EC" id="6.1.1.7" evidence="1"/>
<dbReference type="EMBL" id="AP009044">
    <property type="protein sequence ID" value="BAF54673.1"/>
    <property type="molecule type" value="Genomic_DNA"/>
</dbReference>
<dbReference type="RefSeq" id="WP_003855946.1">
    <property type="nucleotide sequence ID" value="NC_009342.1"/>
</dbReference>
<dbReference type="SMR" id="A4QEK7"/>
<dbReference type="KEGG" id="cgt:cgR_1680"/>
<dbReference type="HOGENOM" id="CLU_004485_1_1_11"/>
<dbReference type="PhylomeDB" id="A4QEK7"/>
<dbReference type="Proteomes" id="UP000006698">
    <property type="component" value="Chromosome"/>
</dbReference>
<dbReference type="GO" id="GO:0005829">
    <property type="term" value="C:cytosol"/>
    <property type="evidence" value="ECO:0007669"/>
    <property type="project" value="TreeGrafter"/>
</dbReference>
<dbReference type="GO" id="GO:0004813">
    <property type="term" value="F:alanine-tRNA ligase activity"/>
    <property type="evidence" value="ECO:0007669"/>
    <property type="project" value="UniProtKB-UniRule"/>
</dbReference>
<dbReference type="GO" id="GO:0002161">
    <property type="term" value="F:aminoacyl-tRNA deacylase activity"/>
    <property type="evidence" value="ECO:0007669"/>
    <property type="project" value="TreeGrafter"/>
</dbReference>
<dbReference type="GO" id="GO:0005524">
    <property type="term" value="F:ATP binding"/>
    <property type="evidence" value="ECO:0007669"/>
    <property type="project" value="UniProtKB-UniRule"/>
</dbReference>
<dbReference type="GO" id="GO:0000049">
    <property type="term" value="F:tRNA binding"/>
    <property type="evidence" value="ECO:0007669"/>
    <property type="project" value="UniProtKB-KW"/>
</dbReference>
<dbReference type="GO" id="GO:0008270">
    <property type="term" value="F:zinc ion binding"/>
    <property type="evidence" value="ECO:0007669"/>
    <property type="project" value="UniProtKB-UniRule"/>
</dbReference>
<dbReference type="GO" id="GO:0006419">
    <property type="term" value="P:alanyl-tRNA aminoacylation"/>
    <property type="evidence" value="ECO:0007669"/>
    <property type="project" value="UniProtKB-UniRule"/>
</dbReference>
<dbReference type="CDD" id="cd00673">
    <property type="entry name" value="AlaRS_core"/>
    <property type="match status" value="1"/>
</dbReference>
<dbReference type="FunFam" id="2.40.30.130:FF:000001">
    <property type="entry name" value="Alanine--tRNA ligase"/>
    <property type="match status" value="1"/>
</dbReference>
<dbReference type="FunFam" id="3.10.310.40:FF:000001">
    <property type="entry name" value="Alanine--tRNA ligase"/>
    <property type="match status" value="1"/>
</dbReference>
<dbReference type="FunFam" id="3.30.54.20:FF:000001">
    <property type="entry name" value="Alanine--tRNA ligase"/>
    <property type="match status" value="1"/>
</dbReference>
<dbReference type="FunFam" id="3.30.930.10:FF:000004">
    <property type="entry name" value="Alanine--tRNA ligase"/>
    <property type="match status" value="1"/>
</dbReference>
<dbReference type="FunFam" id="3.30.980.10:FF:000004">
    <property type="entry name" value="Alanine--tRNA ligase, cytoplasmic"/>
    <property type="match status" value="1"/>
</dbReference>
<dbReference type="Gene3D" id="2.40.30.130">
    <property type="match status" value="1"/>
</dbReference>
<dbReference type="Gene3D" id="3.10.310.40">
    <property type="match status" value="1"/>
</dbReference>
<dbReference type="Gene3D" id="3.30.54.20">
    <property type="match status" value="1"/>
</dbReference>
<dbReference type="Gene3D" id="6.10.250.550">
    <property type="match status" value="1"/>
</dbReference>
<dbReference type="Gene3D" id="3.30.930.10">
    <property type="entry name" value="Bira Bifunctional Protein, Domain 2"/>
    <property type="match status" value="1"/>
</dbReference>
<dbReference type="Gene3D" id="3.30.980.10">
    <property type="entry name" value="Threonyl-trna Synthetase, Chain A, domain 2"/>
    <property type="match status" value="1"/>
</dbReference>
<dbReference type="HAMAP" id="MF_00036_B">
    <property type="entry name" value="Ala_tRNA_synth_B"/>
    <property type="match status" value="1"/>
</dbReference>
<dbReference type="InterPro" id="IPR045864">
    <property type="entry name" value="aa-tRNA-synth_II/BPL/LPL"/>
</dbReference>
<dbReference type="InterPro" id="IPR002318">
    <property type="entry name" value="Ala-tRNA-lgiase_IIc"/>
</dbReference>
<dbReference type="InterPro" id="IPR018162">
    <property type="entry name" value="Ala-tRNA-ligase_IIc_anticod-bd"/>
</dbReference>
<dbReference type="InterPro" id="IPR018165">
    <property type="entry name" value="Ala-tRNA-synth_IIc_core"/>
</dbReference>
<dbReference type="InterPro" id="IPR018164">
    <property type="entry name" value="Ala-tRNA-synth_IIc_N"/>
</dbReference>
<dbReference type="InterPro" id="IPR050058">
    <property type="entry name" value="Ala-tRNA_ligase"/>
</dbReference>
<dbReference type="InterPro" id="IPR023033">
    <property type="entry name" value="Ala_tRNA_ligase_euk/bac"/>
</dbReference>
<dbReference type="InterPro" id="IPR003156">
    <property type="entry name" value="DHHA1_dom"/>
</dbReference>
<dbReference type="InterPro" id="IPR018163">
    <property type="entry name" value="Thr/Ala-tRNA-synth_IIc_edit"/>
</dbReference>
<dbReference type="InterPro" id="IPR009000">
    <property type="entry name" value="Transl_B-barrel_sf"/>
</dbReference>
<dbReference type="InterPro" id="IPR012947">
    <property type="entry name" value="tRNA_SAD"/>
</dbReference>
<dbReference type="NCBIfam" id="TIGR00344">
    <property type="entry name" value="alaS"/>
    <property type="match status" value="1"/>
</dbReference>
<dbReference type="PANTHER" id="PTHR11777:SF9">
    <property type="entry name" value="ALANINE--TRNA LIGASE, CYTOPLASMIC"/>
    <property type="match status" value="1"/>
</dbReference>
<dbReference type="PANTHER" id="PTHR11777">
    <property type="entry name" value="ALANYL-TRNA SYNTHETASE"/>
    <property type="match status" value="1"/>
</dbReference>
<dbReference type="Pfam" id="PF02272">
    <property type="entry name" value="DHHA1"/>
    <property type="match status" value="1"/>
</dbReference>
<dbReference type="Pfam" id="PF01411">
    <property type="entry name" value="tRNA-synt_2c"/>
    <property type="match status" value="1"/>
</dbReference>
<dbReference type="Pfam" id="PF07973">
    <property type="entry name" value="tRNA_SAD"/>
    <property type="match status" value="1"/>
</dbReference>
<dbReference type="PRINTS" id="PR00980">
    <property type="entry name" value="TRNASYNTHALA"/>
</dbReference>
<dbReference type="SMART" id="SM00863">
    <property type="entry name" value="tRNA_SAD"/>
    <property type="match status" value="1"/>
</dbReference>
<dbReference type="SUPFAM" id="SSF55681">
    <property type="entry name" value="Class II aaRS and biotin synthetases"/>
    <property type="match status" value="1"/>
</dbReference>
<dbReference type="SUPFAM" id="SSF101353">
    <property type="entry name" value="Putative anticodon-binding domain of alanyl-tRNA synthetase (AlaRS)"/>
    <property type="match status" value="1"/>
</dbReference>
<dbReference type="SUPFAM" id="SSF55186">
    <property type="entry name" value="ThrRS/AlaRS common domain"/>
    <property type="match status" value="1"/>
</dbReference>
<dbReference type="SUPFAM" id="SSF50447">
    <property type="entry name" value="Translation proteins"/>
    <property type="match status" value="1"/>
</dbReference>
<dbReference type="PROSITE" id="PS50860">
    <property type="entry name" value="AA_TRNA_LIGASE_II_ALA"/>
    <property type="match status" value="1"/>
</dbReference>
<organism>
    <name type="scientific">Corynebacterium glutamicum (strain R)</name>
    <dbReference type="NCBI Taxonomy" id="340322"/>
    <lineage>
        <taxon>Bacteria</taxon>
        <taxon>Bacillati</taxon>
        <taxon>Actinomycetota</taxon>
        <taxon>Actinomycetes</taxon>
        <taxon>Mycobacteriales</taxon>
        <taxon>Corynebacteriaceae</taxon>
        <taxon>Corynebacterium</taxon>
    </lineage>
</organism>